<organism>
    <name type="scientific">Schizosaccharomyces pombe (strain 972 / ATCC 24843)</name>
    <name type="common">Fission yeast</name>
    <dbReference type="NCBI Taxonomy" id="284812"/>
    <lineage>
        <taxon>Eukaryota</taxon>
        <taxon>Fungi</taxon>
        <taxon>Dikarya</taxon>
        <taxon>Ascomycota</taxon>
        <taxon>Taphrinomycotina</taxon>
        <taxon>Schizosaccharomycetes</taxon>
        <taxon>Schizosaccharomycetales</taxon>
        <taxon>Schizosaccharomycetaceae</taxon>
        <taxon>Schizosaccharomyces</taxon>
    </lineage>
</organism>
<gene>
    <name type="ORF">SPCC417.15</name>
</gene>
<sequence length="43" mass="5123">MKRKIIAIGIFFRLFIIHIHFSHHCCENHFINPLVCLIALFCI</sequence>
<dbReference type="EMBL" id="CU329672">
    <property type="protein sequence ID" value="CAO77694.1"/>
    <property type="molecule type" value="Genomic_DNA"/>
</dbReference>
<dbReference type="RefSeq" id="XP_001713169.1">
    <property type="nucleotide sequence ID" value="XM_001713117.2"/>
</dbReference>
<dbReference type="BioGRID" id="857861">
    <property type="interactions" value="2"/>
</dbReference>
<dbReference type="PaxDb" id="4896-SPCC417.15.1"/>
<dbReference type="EnsemblFungi" id="SPCC417.15.1">
    <property type="protein sequence ID" value="SPCC417.15.1:pep"/>
    <property type="gene ID" value="SPCC417.15"/>
</dbReference>
<dbReference type="PomBase" id="SPCC417.15"/>
<dbReference type="VEuPathDB" id="FungiDB:SPCC417.15"/>
<dbReference type="HOGENOM" id="CLU_3242410_0_0_1"/>
<dbReference type="InParanoid" id="A6X995"/>
<dbReference type="PRO" id="PR:A6X995"/>
<dbReference type="Proteomes" id="UP000002485">
    <property type="component" value="Chromosome III"/>
</dbReference>
<keyword id="KW-1185">Reference proteome</keyword>
<keyword id="KW-0732">Signal</keyword>
<accession>A6X995</accession>
<reference key="1">
    <citation type="journal article" date="2002" name="Nature">
        <title>The genome sequence of Schizosaccharomyces pombe.</title>
        <authorList>
            <person name="Wood V."/>
            <person name="Gwilliam R."/>
            <person name="Rajandream M.A."/>
            <person name="Lyne M.H."/>
            <person name="Lyne R."/>
            <person name="Stewart A."/>
            <person name="Sgouros J.G."/>
            <person name="Peat N."/>
            <person name="Hayles J."/>
            <person name="Baker S.G."/>
            <person name="Basham D."/>
            <person name="Bowman S."/>
            <person name="Brooks K."/>
            <person name="Brown D."/>
            <person name="Brown S."/>
            <person name="Chillingworth T."/>
            <person name="Churcher C.M."/>
            <person name="Collins M."/>
            <person name="Connor R."/>
            <person name="Cronin A."/>
            <person name="Davis P."/>
            <person name="Feltwell T."/>
            <person name="Fraser A."/>
            <person name="Gentles S."/>
            <person name="Goble A."/>
            <person name="Hamlin N."/>
            <person name="Harris D.E."/>
            <person name="Hidalgo J."/>
            <person name="Hodgson G."/>
            <person name="Holroyd S."/>
            <person name="Hornsby T."/>
            <person name="Howarth S."/>
            <person name="Huckle E.J."/>
            <person name="Hunt S."/>
            <person name="Jagels K."/>
            <person name="James K.D."/>
            <person name="Jones L."/>
            <person name="Jones M."/>
            <person name="Leather S."/>
            <person name="McDonald S."/>
            <person name="McLean J."/>
            <person name="Mooney P."/>
            <person name="Moule S."/>
            <person name="Mungall K.L."/>
            <person name="Murphy L.D."/>
            <person name="Niblett D."/>
            <person name="Odell C."/>
            <person name="Oliver K."/>
            <person name="O'Neil S."/>
            <person name="Pearson D."/>
            <person name="Quail M.A."/>
            <person name="Rabbinowitsch E."/>
            <person name="Rutherford K.M."/>
            <person name="Rutter S."/>
            <person name="Saunders D."/>
            <person name="Seeger K."/>
            <person name="Sharp S."/>
            <person name="Skelton J."/>
            <person name="Simmonds M.N."/>
            <person name="Squares R."/>
            <person name="Squares S."/>
            <person name="Stevens K."/>
            <person name="Taylor K."/>
            <person name="Taylor R.G."/>
            <person name="Tivey A."/>
            <person name="Walsh S.V."/>
            <person name="Warren T."/>
            <person name="Whitehead S."/>
            <person name="Woodward J.R."/>
            <person name="Volckaert G."/>
            <person name="Aert R."/>
            <person name="Robben J."/>
            <person name="Grymonprez B."/>
            <person name="Weltjens I."/>
            <person name="Vanstreels E."/>
            <person name="Rieger M."/>
            <person name="Schaefer M."/>
            <person name="Mueller-Auer S."/>
            <person name="Gabel C."/>
            <person name="Fuchs M."/>
            <person name="Duesterhoeft A."/>
            <person name="Fritzc C."/>
            <person name="Holzer E."/>
            <person name="Moestl D."/>
            <person name="Hilbert H."/>
            <person name="Borzym K."/>
            <person name="Langer I."/>
            <person name="Beck A."/>
            <person name="Lehrach H."/>
            <person name="Reinhardt R."/>
            <person name="Pohl T.M."/>
            <person name="Eger P."/>
            <person name="Zimmermann W."/>
            <person name="Wedler H."/>
            <person name="Wambutt R."/>
            <person name="Purnelle B."/>
            <person name="Goffeau A."/>
            <person name="Cadieu E."/>
            <person name="Dreano S."/>
            <person name="Gloux S."/>
            <person name="Lelaure V."/>
            <person name="Mottier S."/>
            <person name="Galibert F."/>
            <person name="Aves S.J."/>
            <person name="Xiang Z."/>
            <person name="Hunt C."/>
            <person name="Moore K."/>
            <person name="Hurst S.M."/>
            <person name="Lucas M."/>
            <person name="Rochet M."/>
            <person name="Gaillardin C."/>
            <person name="Tallada V.A."/>
            <person name="Garzon A."/>
            <person name="Thode G."/>
            <person name="Daga R.R."/>
            <person name="Cruzado L."/>
            <person name="Jimenez J."/>
            <person name="Sanchez M."/>
            <person name="del Rey F."/>
            <person name="Benito J."/>
            <person name="Dominguez A."/>
            <person name="Revuelta J.L."/>
            <person name="Moreno S."/>
            <person name="Armstrong J."/>
            <person name="Forsburg S.L."/>
            <person name="Cerutti L."/>
            <person name="Lowe T."/>
            <person name="McCombie W.R."/>
            <person name="Paulsen I."/>
            <person name="Potashkin J."/>
            <person name="Shpakovski G.V."/>
            <person name="Ussery D."/>
            <person name="Barrell B.G."/>
            <person name="Nurse P."/>
        </authorList>
    </citation>
    <scope>NUCLEOTIDE SEQUENCE [LARGE SCALE GENOMIC DNA]</scope>
    <source>
        <strain>972 / ATCC 24843</strain>
    </source>
</reference>
<protein>
    <recommendedName>
        <fullName>Putative uncharacterized protein C417.15</fullName>
    </recommendedName>
</protein>
<evidence type="ECO:0000255" key="1"/>
<name>YC7F_SCHPO</name>
<feature type="signal peptide" evidence="1">
    <location>
        <begin position="1"/>
        <end position="22"/>
    </location>
</feature>
<feature type="chain" id="PRO_0000303992" description="Putative uncharacterized protein C417.15">
    <location>
        <begin position="23"/>
        <end position="43"/>
    </location>
</feature>
<proteinExistence type="inferred from homology"/>